<keyword id="KW-0046">Antibiotic resistance</keyword>
<keyword id="KW-0238">DNA-binding</keyword>
<keyword id="KW-1185">Reference proteome</keyword>
<keyword id="KW-0804">Transcription</keyword>
<keyword id="KW-0805">Transcription regulation</keyword>
<protein>
    <recommendedName>
        <fullName evidence="3">HTH-type transcriptional regulator MT0903.1</fullName>
    </recommendedName>
</protein>
<dbReference type="EMBL" id="AE000516">
    <property type="status" value="NOT_ANNOTATED_CDS"/>
    <property type="molecule type" value="Genomic_DNA"/>
</dbReference>
<dbReference type="PIR" id="E70780">
    <property type="entry name" value="E70780"/>
</dbReference>
<dbReference type="RefSeq" id="WP_003404606.1">
    <property type="nucleotide sequence ID" value="NZ_KK341227.1"/>
</dbReference>
<dbReference type="SMR" id="P9WMF0"/>
<dbReference type="PATRIC" id="fig|83331.31.peg.970"/>
<dbReference type="Proteomes" id="UP000001020">
    <property type="component" value="Chromosome"/>
</dbReference>
<dbReference type="GO" id="GO:0003677">
    <property type="term" value="F:DNA binding"/>
    <property type="evidence" value="ECO:0007669"/>
    <property type="project" value="UniProtKB-KW"/>
</dbReference>
<dbReference type="GO" id="GO:0003700">
    <property type="term" value="F:DNA-binding transcription factor activity"/>
    <property type="evidence" value="ECO:0007669"/>
    <property type="project" value="InterPro"/>
</dbReference>
<dbReference type="GO" id="GO:0046677">
    <property type="term" value="P:response to antibiotic"/>
    <property type="evidence" value="ECO:0007669"/>
    <property type="project" value="UniProtKB-KW"/>
</dbReference>
<dbReference type="Gene3D" id="1.10.10.10">
    <property type="entry name" value="Winged helix-like DNA-binding domain superfamily/Winged helix DNA-binding domain"/>
    <property type="match status" value="1"/>
</dbReference>
<dbReference type="InterPro" id="IPR052526">
    <property type="entry name" value="HTH-type_Bedaq_tolerance"/>
</dbReference>
<dbReference type="InterPro" id="IPR000835">
    <property type="entry name" value="HTH_MarR-typ"/>
</dbReference>
<dbReference type="InterPro" id="IPR023187">
    <property type="entry name" value="Tscrpt_reg_MarR-type_CS"/>
</dbReference>
<dbReference type="InterPro" id="IPR036388">
    <property type="entry name" value="WH-like_DNA-bd_sf"/>
</dbReference>
<dbReference type="InterPro" id="IPR036390">
    <property type="entry name" value="WH_DNA-bd_sf"/>
</dbReference>
<dbReference type="PANTHER" id="PTHR39515">
    <property type="entry name" value="CONSERVED PROTEIN"/>
    <property type="match status" value="1"/>
</dbReference>
<dbReference type="PANTHER" id="PTHR39515:SF2">
    <property type="entry name" value="HTH-TYPE TRANSCRIPTIONAL REGULATOR RV0880"/>
    <property type="match status" value="1"/>
</dbReference>
<dbReference type="Pfam" id="PF01047">
    <property type="entry name" value="MarR"/>
    <property type="match status" value="1"/>
</dbReference>
<dbReference type="SMART" id="SM00347">
    <property type="entry name" value="HTH_MARR"/>
    <property type="match status" value="1"/>
</dbReference>
<dbReference type="SUPFAM" id="SSF46785">
    <property type="entry name" value="Winged helix' DNA-binding domain"/>
    <property type="match status" value="1"/>
</dbReference>
<dbReference type="PROSITE" id="PS01117">
    <property type="entry name" value="HTH_MARR_1"/>
    <property type="match status" value="1"/>
</dbReference>
<dbReference type="PROSITE" id="PS50995">
    <property type="entry name" value="HTH_MARR_2"/>
    <property type="match status" value="1"/>
</dbReference>
<evidence type="ECO:0000250" key="1">
    <source>
        <dbReference type="UniProtKB" id="P9WMF1"/>
    </source>
</evidence>
<evidence type="ECO:0000255" key="2">
    <source>
        <dbReference type="PROSITE-ProRule" id="PRU00345"/>
    </source>
</evidence>
<evidence type="ECO:0000305" key="3"/>
<gene>
    <name type="ordered locus">MT0903.1</name>
</gene>
<comment type="function">
    <text evidence="1">Part of a regulatory network that coordinates tolerance to the antitubercular drug bedaquiline.</text>
</comment>
<comment type="subunit">
    <text evidence="1">Homodimer.</text>
</comment>
<proteinExistence type="inferred from homology"/>
<accession>P9WMF0</accession>
<accession>L0T7S8</accession>
<accession>P67745</accession>
<accession>Q10542</accession>
<sequence>MLDSDARLASDLSLAVMRLSRQLRFRNPSSPVSLSQLSALTTLANEGAMTPGALAIRERVRPPSMTRVIASLADMGFVDRAPHPIDGRQVLVSVSESGAELVKAARRARQEWLAERLATLNRSERDILRSAADLMLALVDESP</sequence>
<feature type="chain" id="PRO_0000427315" description="HTH-type transcriptional regulator MT0903.1">
    <location>
        <begin position="1"/>
        <end position="143"/>
    </location>
</feature>
<feature type="domain" description="HTH marR-type" evidence="2">
    <location>
        <begin position="5"/>
        <end position="137"/>
    </location>
</feature>
<feature type="DNA-binding region" description="H-T-H motif" evidence="2">
    <location>
        <begin position="51"/>
        <end position="74"/>
    </location>
</feature>
<organism>
    <name type="scientific">Mycobacterium tuberculosis (strain CDC 1551 / Oshkosh)</name>
    <dbReference type="NCBI Taxonomy" id="83331"/>
    <lineage>
        <taxon>Bacteria</taxon>
        <taxon>Bacillati</taxon>
        <taxon>Actinomycetota</taxon>
        <taxon>Actinomycetes</taxon>
        <taxon>Mycobacteriales</taxon>
        <taxon>Mycobacteriaceae</taxon>
        <taxon>Mycobacterium</taxon>
        <taxon>Mycobacterium tuberculosis complex</taxon>
    </lineage>
</organism>
<name>Y880_MYCTO</name>
<reference key="1">
    <citation type="journal article" date="2002" name="J. Bacteriol.">
        <title>Whole-genome comparison of Mycobacterium tuberculosis clinical and laboratory strains.</title>
        <authorList>
            <person name="Fleischmann R.D."/>
            <person name="Alland D."/>
            <person name="Eisen J.A."/>
            <person name="Carpenter L."/>
            <person name="White O."/>
            <person name="Peterson J.D."/>
            <person name="DeBoy R.T."/>
            <person name="Dodson R.J."/>
            <person name="Gwinn M.L."/>
            <person name="Haft D.H."/>
            <person name="Hickey E.K."/>
            <person name="Kolonay J.F."/>
            <person name="Nelson W.C."/>
            <person name="Umayam L.A."/>
            <person name="Ermolaeva M.D."/>
            <person name="Salzberg S.L."/>
            <person name="Delcher A."/>
            <person name="Utterback T.R."/>
            <person name="Weidman J.F."/>
            <person name="Khouri H.M."/>
            <person name="Gill J."/>
            <person name="Mikula A."/>
            <person name="Bishai W."/>
            <person name="Jacobs W.R. Jr."/>
            <person name="Venter J.C."/>
            <person name="Fraser C.M."/>
        </authorList>
    </citation>
    <scope>NUCLEOTIDE SEQUENCE [LARGE SCALE GENOMIC DNA]</scope>
    <source>
        <strain>CDC 1551 / Oshkosh</strain>
    </source>
</reference>